<comment type="function">
    <text evidence="2">Deacetylase involved in the biosynthesis of butirosin by mediating deacetylation of 2'-N-acetylparomamine.</text>
</comment>
<comment type="catalytic activity">
    <reaction evidence="2">
        <text>2'-N-acetylparomamine + H2O = paromamine + acetate</text>
        <dbReference type="Rhea" id="RHEA:34031"/>
        <dbReference type="ChEBI" id="CHEBI:15377"/>
        <dbReference type="ChEBI" id="CHEBI:30089"/>
        <dbReference type="ChEBI" id="CHEBI:65010"/>
        <dbReference type="ChEBI" id="CHEBI:65015"/>
        <dbReference type="EC" id="3.5.1.112"/>
    </reaction>
</comment>
<comment type="cofactor">
    <cofactor evidence="1">
        <name>Zn(2+)</name>
        <dbReference type="ChEBI" id="CHEBI:29105"/>
    </cofactor>
    <text evidence="1">Binds 1 zinc ion per subunit.</text>
</comment>
<comment type="pathway">
    <text>Antibiotic biosynthesis; butirosin biosynthesis.</text>
</comment>
<comment type="similarity">
    <text evidence="3">Belongs to the PIGL family.</text>
</comment>
<comment type="caution">
    <text evidence="4 5">Was initially thought to function as a nucleotidyltransferase (PubMed:15701005). But it was later shown that it is a deacetylase (PubMed:17226887).</text>
</comment>
<keyword id="KW-0045">Antibiotic biosynthesis</keyword>
<keyword id="KW-0378">Hydrolase</keyword>
<keyword id="KW-0479">Metal-binding</keyword>
<keyword id="KW-0862">Zinc</keyword>
<proteinExistence type="evidence at protein level"/>
<feature type="chain" id="PRO_0000421744" description="2'-N-acetylparomamine deacetylase">
    <location>
        <begin position="1"/>
        <end position="275"/>
    </location>
</feature>
<feature type="binding site" evidence="1">
    <location>
        <position position="14"/>
    </location>
    <ligand>
        <name>Zn(2+)</name>
        <dbReference type="ChEBI" id="CHEBI:29105"/>
    </ligand>
</feature>
<feature type="binding site" evidence="1">
    <location>
        <position position="17"/>
    </location>
    <ligand>
        <name>Zn(2+)</name>
        <dbReference type="ChEBI" id="CHEBI:29105"/>
    </ligand>
</feature>
<feature type="binding site" evidence="1">
    <location>
        <position position="166"/>
    </location>
    <ligand>
        <name>Zn(2+)</name>
        <dbReference type="ChEBI" id="CHEBI:29105"/>
    </ligand>
</feature>
<sequence length="275" mass="31822">MNQDKRAFMFISPHFDDVILSCASTLMELMNQGHTCKVLTVFGGCPSVRFQPGEIARQYAAEDLGLFEDEIEGDHLSILVARRLQEDQQAFRHLPGVQVEVLSFPDAIYRENKGQPYYRTEADLFGIPDKQDEDIFLPKIETYLQSCDLARKYTWVFPAISKHVDHRLLTKAGLRLMSQGYPVLFYSEFPYWQQHNEFLQDGWRQLELRNSVYTPVKRAAVLEYKTQLLGLFGEEAETKINNGGVLSEAELFWIQETDTQAWRVFRSLSPEPLQT</sequence>
<protein>
    <recommendedName>
        <fullName>2'-N-acetylparomamine deacetylase</fullName>
        <ecNumber>3.5.1.112</ecNumber>
    </recommendedName>
    <alternativeName>
        <fullName>Butirosin biosynthesis protein D</fullName>
    </alternativeName>
</protein>
<dbReference type="EC" id="3.5.1.112"/>
<dbReference type="EMBL" id="AB097196">
    <property type="protein sequence ID" value="BAE07068.1"/>
    <property type="molecule type" value="Genomic_DNA"/>
</dbReference>
<dbReference type="EMBL" id="AJ781030">
    <property type="protein sequence ID" value="CAG77422.1"/>
    <property type="molecule type" value="Genomic_DNA"/>
</dbReference>
<dbReference type="SMR" id="Q4H4F3"/>
<dbReference type="BioCyc" id="MetaCyc:MONOMER-17232"/>
<dbReference type="UniPathway" id="UPA00964"/>
<dbReference type="GO" id="GO:0016811">
    <property type="term" value="F:hydrolase activity, acting on carbon-nitrogen (but not peptide) bonds, in linear amides"/>
    <property type="evidence" value="ECO:0000314"/>
    <property type="project" value="UniProtKB"/>
</dbReference>
<dbReference type="GO" id="GO:0046872">
    <property type="term" value="F:metal ion binding"/>
    <property type="evidence" value="ECO:0007669"/>
    <property type="project" value="UniProtKB-KW"/>
</dbReference>
<dbReference type="GO" id="GO:0017000">
    <property type="term" value="P:antibiotic biosynthetic process"/>
    <property type="evidence" value="ECO:0000314"/>
    <property type="project" value="UniProtKB"/>
</dbReference>
<dbReference type="FunFam" id="3.40.50.10320:FF:000011">
    <property type="entry name" value="N-acetylglucosaminylphosphatidylinositol deacetylase"/>
    <property type="match status" value="1"/>
</dbReference>
<dbReference type="Gene3D" id="3.40.50.10320">
    <property type="entry name" value="LmbE-like"/>
    <property type="match status" value="1"/>
</dbReference>
<dbReference type="InterPro" id="IPR003737">
    <property type="entry name" value="GlcNAc_PI_deacetylase-related"/>
</dbReference>
<dbReference type="InterPro" id="IPR024078">
    <property type="entry name" value="LmbE-like_dom_sf"/>
</dbReference>
<dbReference type="Pfam" id="PF02585">
    <property type="entry name" value="PIG-L"/>
    <property type="match status" value="1"/>
</dbReference>
<dbReference type="SUPFAM" id="SSF102588">
    <property type="entry name" value="LmbE-like"/>
    <property type="match status" value="1"/>
</dbReference>
<reference key="1">
    <citation type="journal article" date="2005" name="J. Antibiot.">
        <title>Extended sequence and functional analysis of the butirosin biosynthetic gene cluster in Bacillus circulans SANK 72073.</title>
        <authorList>
            <person name="Kudo F."/>
            <person name="Numakura M."/>
            <person name="Tamegai H."/>
            <person name="Yamamoto H."/>
            <person name="Eguchi T."/>
            <person name="Kakinuma K."/>
        </authorList>
    </citation>
    <scope>NUCLEOTIDE SEQUENCE [GENOMIC DNA]</scope>
    <source>
        <strain>ATCC 21557 / NCIMB 12336 / BU-1709-YQW-B6</strain>
    </source>
</reference>
<reference key="2">
    <citation type="submission" date="2004-06" db="EMBL/GenBank/DDBJ databases">
        <title>Analysis and comparison of the biosynthetic gene clusters for the 2-deoxystreptamine-containing aminoglycoside antibiotics ribostamycin, neomycin, lividomycin, paromomycin and butirosin.</title>
        <authorList>
            <person name="Aboshanab K.M."/>
            <person name="Schmidt-Beissner H."/>
            <person name="Wehmeier U.F."/>
            <person name="Welzel K."/>
            <person name="Vente A."/>
            <person name="Piepersberg W."/>
        </authorList>
    </citation>
    <scope>NUCLEOTIDE SEQUENCE [GENOMIC DNA]</scope>
    <source>
        <strain>ATCC 21557 / NCIMB 12336 / BU-1709-YQW-B6</strain>
    </source>
</reference>
<reference key="3">
    <citation type="journal article" date="2005" name="J. Am. Chem. Soc.">
        <title>A new family of glucose-1-phosphate/glucosamine-1-phosphate nucleotidylyltransferase in the biosynthetic pathways for antibiotics.</title>
        <authorList>
            <person name="Kudo F."/>
            <person name="Kawabe K."/>
            <person name="Kuriki H."/>
            <person name="Eguchi T."/>
            <person name="Kakinuma K."/>
        </authorList>
    </citation>
    <scope>PRELIMINARY FUNCTION</scope>
</reference>
<reference key="4">
    <citation type="journal article" date="2007" name="Angew. Chem. Int. Ed.">
        <title>Characterization of the enzyme BtrD from Bacillus circulans and revision of its functional assignment in the biosynthesis of butirosin.</title>
        <authorList>
            <person name="Truman A.W."/>
            <person name="Huang F."/>
            <person name="Llewellyn N.M."/>
            <person name="Spencer J.B."/>
        </authorList>
    </citation>
    <scope>FUNCTION</scope>
    <scope>CATALYTIC ACTIVITY</scope>
</reference>
<name>BTRD_NIACI</name>
<organism>
    <name type="scientific">Niallia circulans</name>
    <name type="common">Bacillus circulans</name>
    <dbReference type="NCBI Taxonomy" id="1397"/>
    <lineage>
        <taxon>Bacteria</taxon>
        <taxon>Bacillati</taxon>
        <taxon>Bacillota</taxon>
        <taxon>Bacilli</taxon>
        <taxon>Bacillales</taxon>
        <taxon>Bacillaceae</taxon>
        <taxon>Niallia</taxon>
    </lineage>
</organism>
<accession>Q4H4F3</accession>
<gene>
    <name type="primary">btrD</name>
</gene>
<evidence type="ECO:0000250" key="1"/>
<evidence type="ECO:0000269" key="2">
    <source>
    </source>
</evidence>
<evidence type="ECO:0000305" key="3"/>
<evidence type="ECO:0000305" key="4">
    <source>
    </source>
</evidence>
<evidence type="ECO:0000305" key="5">
    <source>
    </source>
</evidence>